<evidence type="ECO:0000250" key="1"/>
<evidence type="ECO:0000255" key="2"/>
<evidence type="ECO:0000269" key="3">
    <source>
    </source>
</evidence>
<evidence type="ECO:0000303" key="4">
    <source ref="3"/>
</evidence>
<evidence type="ECO:0000305" key="5"/>
<accession>Q0WPR4</accession>
<accession>Q3E976</accession>
<accession>Q9FMX9</accession>
<protein>
    <recommendedName>
        <fullName>Serine carboxypeptidase-like 34</fullName>
        <ecNumber>3.4.16.-</ecNumber>
    </recommendedName>
</protein>
<reference key="1">
    <citation type="journal article" date="1997" name="DNA Res.">
        <title>Structural analysis of Arabidopsis thaliana chromosome 5. III. Sequence features of the regions of 1,191,918 bp covered by seventeen physically assigned P1 clones.</title>
        <authorList>
            <person name="Nakamura Y."/>
            <person name="Sato S."/>
            <person name="Kaneko T."/>
            <person name="Kotani H."/>
            <person name="Asamizu E."/>
            <person name="Miyajima N."/>
            <person name="Tabata S."/>
        </authorList>
    </citation>
    <scope>NUCLEOTIDE SEQUENCE [LARGE SCALE GENOMIC DNA]</scope>
    <source>
        <strain>cv. Columbia</strain>
    </source>
</reference>
<reference key="2">
    <citation type="journal article" date="2017" name="Plant J.">
        <title>Araport11: a complete reannotation of the Arabidopsis thaliana reference genome.</title>
        <authorList>
            <person name="Cheng C.Y."/>
            <person name="Krishnakumar V."/>
            <person name="Chan A.P."/>
            <person name="Thibaud-Nissen F."/>
            <person name="Schobel S."/>
            <person name="Town C.D."/>
        </authorList>
    </citation>
    <scope>GENOME REANNOTATION</scope>
    <source>
        <strain>cv. Columbia</strain>
    </source>
</reference>
<reference key="3">
    <citation type="submission" date="2006-07" db="EMBL/GenBank/DDBJ databases">
        <title>Large-scale analysis of RIKEN Arabidopsis full-length (RAFL) cDNAs.</title>
        <authorList>
            <person name="Totoki Y."/>
            <person name="Seki M."/>
            <person name="Ishida J."/>
            <person name="Nakajima M."/>
            <person name="Enju A."/>
            <person name="Kamiya A."/>
            <person name="Narusaka M."/>
            <person name="Shin-i T."/>
            <person name="Nakagawa M."/>
            <person name="Sakamoto N."/>
            <person name="Oishi K."/>
            <person name="Kohara Y."/>
            <person name="Kobayashi M."/>
            <person name="Toyoda A."/>
            <person name="Sakaki Y."/>
            <person name="Sakurai T."/>
            <person name="Iida K."/>
            <person name="Akiyama K."/>
            <person name="Satou M."/>
            <person name="Toyoda T."/>
            <person name="Konagaya A."/>
            <person name="Carninci P."/>
            <person name="Kawai J."/>
            <person name="Hayashizaki Y."/>
            <person name="Shinozaki K."/>
        </authorList>
    </citation>
    <scope>NUCLEOTIDE SEQUENCE [LARGE SCALE MRNA] (ISOFORM 2)</scope>
    <source>
        <strain>cv. Columbia</strain>
    </source>
</reference>
<reference key="4">
    <citation type="journal article" date="2005" name="Plant Physiol.">
        <title>An expression and bioinformatics analysis of the Arabidopsis serine carboxypeptidase-like gene family.</title>
        <authorList>
            <person name="Fraser C.M."/>
            <person name="Rider L.W."/>
            <person name="Chapple C."/>
        </authorList>
    </citation>
    <scope>GENE FAMILY</scope>
    <scope>TISSUE SPECIFICITY</scope>
    <scope>NOMENCLATURE</scope>
</reference>
<name>SCP34_ARATH</name>
<gene>
    <name type="primary">SCPL34</name>
    <name type="ordered locus">At5g23210</name>
    <name type="ORF">MKD15.7</name>
</gene>
<organism>
    <name type="scientific">Arabidopsis thaliana</name>
    <name type="common">Mouse-ear cress</name>
    <dbReference type="NCBI Taxonomy" id="3702"/>
    <lineage>
        <taxon>Eukaryota</taxon>
        <taxon>Viridiplantae</taxon>
        <taxon>Streptophyta</taxon>
        <taxon>Embryophyta</taxon>
        <taxon>Tracheophyta</taxon>
        <taxon>Spermatophyta</taxon>
        <taxon>Magnoliopsida</taxon>
        <taxon>eudicotyledons</taxon>
        <taxon>Gunneridae</taxon>
        <taxon>Pentapetalae</taxon>
        <taxon>rosids</taxon>
        <taxon>malvids</taxon>
        <taxon>Brassicales</taxon>
        <taxon>Brassicaceae</taxon>
        <taxon>Camelineae</taxon>
        <taxon>Arabidopsis</taxon>
    </lineage>
</organism>
<dbReference type="EC" id="3.4.16.-"/>
<dbReference type="EMBL" id="AB007648">
    <property type="protein sequence ID" value="BAB11176.1"/>
    <property type="molecule type" value="Genomic_DNA"/>
</dbReference>
<dbReference type="EMBL" id="CP002688">
    <property type="protein sequence ID" value="AED93133.1"/>
    <property type="molecule type" value="Genomic_DNA"/>
</dbReference>
<dbReference type="EMBL" id="CP002688">
    <property type="protein sequence ID" value="AED93136.1"/>
    <property type="molecule type" value="Genomic_DNA"/>
</dbReference>
<dbReference type="EMBL" id="AK228998">
    <property type="protein sequence ID" value="BAF00885.1"/>
    <property type="molecule type" value="mRNA"/>
</dbReference>
<dbReference type="RefSeq" id="NP_001078616.1">
    <molecule id="Q0WPR4-2"/>
    <property type="nucleotide sequence ID" value="NM_001085147.2"/>
</dbReference>
<dbReference type="RefSeq" id="NP_851062.2">
    <molecule id="Q0WPR4-1"/>
    <property type="nucleotide sequence ID" value="NM_180731.3"/>
</dbReference>
<dbReference type="SMR" id="Q0WPR4"/>
<dbReference type="BioGRID" id="17660">
    <property type="interactions" value="4"/>
</dbReference>
<dbReference type="FunCoup" id="Q0WPR4">
    <property type="interactions" value="10"/>
</dbReference>
<dbReference type="STRING" id="3702.Q0WPR4"/>
<dbReference type="ESTHER" id="arath-SCPL34">
    <property type="family name" value="Carboxypeptidase_S10"/>
</dbReference>
<dbReference type="MEROPS" id="S10.A39"/>
<dbReference type="GlyCosmos" id="Q0WPR4">
    <property type="glycosylation" value="6 sites, No reported glycans"/>
</dbReference>
<dbReference type="GlyGen" id="Q0WPR4">
    <property type="glycosylation" value="6 sites"/>
</dbReference>
<dbReference type="PaxDb" id="3702-AT5G23210.1"/>
<dbReference type="ProteomicsDB" id="226608">
    <molecule id="Q0WPR4-1"/>
</dbReference>
<dbReference type="EnsemblPlants" id="AT5G23210.1">
    <molecule id="Q0WPR4-1"/>
    <property type="protein sequence ID" value="AT5G23210.1"/>
    <property type="gene ID" value="AT5G23210"/>
</dbReference>
<dbReference type="EnsemblPlants" id="AT5G23210.4">
    <molecule id="Q0WPR4-2"/>
    <property type="protein sequence ID" value="AT5G23210.4"/>
    <property type="gene ID" value="AT5G23210"/>
</dbReference>
<dbReference type="GeneID" id="832385"/>
<dbReference type="Gramene" id="AT5G23210.1">
    <molecule id="Q0WPR4-1"/>
    <property type="protein sequence ID" value="AT5G23210.1"/>
    <property type="gene ID" value="AT5G23210"/>
</dbReference>
<dbReference type="Gramene" id="AT5G23210.4">
    <molecule id="Q0WPR4-2"/>
    <property type="protein sequence ID" value="AT5G23210.4"/>
    <property type="gene ID" value="AT5G23210"/>
</dbReference>
<dbReference type="KEGG" id="ath:AT5G23210"/>
<dbReference type="Araport" id="AT5G23210"/>
<dbReference type="TAIR" id="AT5G23210">
    <property type="gene designation" value="SCPL34"/>
</dbReference>
<dbReference type="eggNOG" id="KOG1282">
    <property type="taxonomic scope" value="Eukaryota"/>
</dbReference>
<dbReference type="HOGENOM" id="CLU_008523_13_0_1"/>
<dbReference type="InParanoid" id="Q0WPR4"/>
<dbReference type="PhylomeDB" id="Q0WPR4"/>
<dbReference type="PRO" id="PR:Q0WPR4"/>
<dbReference type="Proteomes" id="UP000006548">
    <property type="component" value="Chromosome 5"/>
</dbReference>
<dbReference type="ExpressionAtlas" id="Q0WPR4">
    <property type="expression patterns" value="baseline and differential"/>
</dbReference>
<dbReference type="GO" id="GO:0005576">
    <property type="term" value="C:extracellular region"/>
    <property type="evidence" value="ECO:0007669"/>
    <property type="project" value="UniProtKB-SubCell"/>
</dbReference>
<dbReference type="GO" id="GO:0000325">
    <property type="term" value="C:plant-type vacuole"/>
    <property type="evidence" value="ECO:0007005"/>
    <property type="project" value="TAIR"/>
</dbReference>
<dbReference type="GO" id="GO:0004185">
    <property type="term" value="F:serine-type carboxypeptidase activity"/>
    <property type="evidence" value="ECO:0007669"/>
    <property type="project" value="InterPro"/>
</dbReference>
<dbReference type="GO" id="GO:0006508">
    <property type="term" value="P:proteolysis"/>
    <property type="evidence" value="ECO:0007669"/>
    <property type="project" value="UniProtKB-KW"/>
</dbReference>
<dbReference type="FunFam" id="3.40.50.11320:FF:000001">
    <property type="entry name" value="Carboxypeptidase"/>
    <property type="match status" value="1"/>
</dbReference>
<dbReference type="FunFam" id="3.40.50.1820:FF:000013">
    <property type="entry name" value="Carboxypeptidase"/>
    <property type="match status" value="1"/>
</dbReference>
<dbReference type="Gene3D" id="3.40.50.11320">
    <property type="match status" value="1"/>
</dbReference>
<dbReference type="Gene3D" id="6.10.250.940">
    <property type="match status" value="1"/>
</dbReference>
<dbReference type="Gene3D" id="3.40.50.1820">
    <property type="entry name" value="alpha/beta hydrolase"/>
    <property type="match status" value="1"/>
</dbReference>
<dbReference type="InterPro" id="IPR029058">
    <property type="entry name" value="AB_hydrolase_fold"/>
</dbReference>
<dbReference type="InterPro" id="IPR001563">
    <property type="entry name" value="Peptidase_S10"/>
</dbReference>
<dbReference type="InterPro" id="IPR033124">
    <property type="entry name" value="Ser_caboxypep_his_AS"/>
</dbReference>
<dbReference type="InterPro" id="IPR018202">
    <property type="entry name" value="Ser_caboxypep_ser_AS"/>
</dbReference>
<dbReference type="PANTHER" id="PTHR11802:SF31">
    <property type="entry name" value="SERINE CARBOXYPEPTIDASE-LIKE 34"/>
    <property type="match status" value="1"/>
</dbReference>
<dbReference type="PANTHER" id="PTHR11802">
    <property type="entry name" value="SERINE PROTEASE FAMILY S10 SERINE CARBOXYPEPTIDASE"/>
    <property type="match status" value="1"/>
</dbReference>
<dbReference type="Pfam" id="PF00450">
    <property type="entry name" value="Peptidase_S10"/>
    <property type="match status" value="1"/>
</dbReference>
<dbReference type="PRINTS" id="PR00724">
    <property type="entry name" value="CRBOXYPTASEC"/>
</dbReference>
<dbReference type="SUPFAM" id="SSF53474">
    <property type="entry name" value="alpha/beta-Hydrolases"/>
    <property type="match status" value="1"/>
</dbReference>
<dbReference type="PROSITE" id="PS00560">
    <property type="entry name" value="CARBOXYPEPT_SER_HIS"/>
    <property type="match status" value="1"/>
</dbReference>
<dbReference type="PROSITE" id="PS00131">
    <property type="entry name" value="CARBOXYPEPT_SER_SER"/>
    <property type="match status" value="1"/>
</dbReference>
<comment type="function">
    <text evidence="1">Probable carboxypeptidase.</text>
</comment>
<comment type="subcellular location">
    <subcellularLocation>
        <location evidence="5">Secreted</location>
    </subcellularLocation>
</comment>
<comment type="alternative products">
    <event type="alternative splicing"/>
    <isoform>
        <id>Q0WPR4-1</id>
        <name>1</name>
        <sequence type="displayed"/>
    </isoform>
    <isoform>
        <id>Q0WPR4-2</id>
        <name>2</name>
        <sequence type="described" ref="VSP_022850 VSP_022851 VSP_022852 VSP_022853"/>
    </isoform>
</comment>
<comment type="tissue specificity">
    <text evidence="3">Ubiquitous.</text>
</comment>
<comment type="miscellaneous">
    <molecule>Isoform 2</molecule>
    <text evidence="5">May be due to a competing donor splice site and to an intron retention.</text>
</comment>
<comment type="similarity">
    <text evidence="5">Belongs to the peptidase S10 family.</text>
</comment>
<proteinExistence type="evidence at transcript level"/>
<sequence>MGSHSVEFSVLVLFLVSFLLGSTSAEKLCSDNDGDNGCFRSRVLAAQRADRVKELPGQPPVKFRQYAGYVTVNETHGRALFYWFFEATQNPSKKPVLLWLNGGPGCSSIGFGAAEELGPFFPQNSSQPKLKLNPYSWNKAANLLFLESPVGVGFSYTNTSRDIKQLGDTVTARDSYNFLVNWFKRFPQYKSHDFYIAGESYAGHYVPQLSELIYKENKIASKKDFINLKGLMIGNALLDDETDQKGMIEYAWDHAVISDALYEKVNKNCDFKQKLVTKECNDALDEYFDVYKILDMYSLYAPKCVPTSTNSSTSHSVAGNRPLPAFRSILRPRLISHNEGWRRMAAGYDPCASEYTEKYMNRKDVQEALHANVTNISYPWTHCSDTVSFWSDAPASMLPTLRTLVSAGLRVWVFSGDTDGRIPVTATRYSLKKLGLKIVQDWTPWYTKLQVGGWTVEYDGLMFVTVRGAGHQVPTFKPREALQLIHHFLGNKKLPTFPF</sequence>
<keyword id="KW-0025">Alternative splicing</keyword>
<keyword id="KW-0121">Carboxypeptidase</keyword>
<keyword id="KW-1015">Disulfide bond</keyword>
<keyword id="KW-0325">Glycoprotein</keyword>
<keyword id="KW-0378">Hydrolase</keyword>
<keyword id="KW-0645">Protease</keyword>
<keyword id="KW-1185">Reference proteome</keyword>
<keyword id="KW-0964">Secreted</keyword>
<keyword id="KW-0732">Signal</keyword>
<feature type="signal peptide" evidence="2">
    <location>
        <begin position="1"/>
        <end position="25"/>
    </location>
</feature>
<feature type="chain" id="PRO_0000274649" description="Serine carboxypeptidase-like 34">
    <location>
        <begin position="26"/>
        <end position="499"/>
    </location>
</feature>
<feature type="active site" evidence="1">
    <location>
        <position position="200"/>
    </location>
</feature>
<feature type="active site" evidence="1">
    <location>
        <position position="419"/>
    </location>
</feature>
<feature type="active site" evidence="1">
    <location>
        <position position="471"/>
    </location>
</feature>
<feature type="glycosylation site" description="N-linked (GlcNAc...) asparagine" evidence="2">
    <location>
        <position position="73"/>
    </location>
</feature>
<feature type="glycosylation site" description="N-linked (GlcNAc...) asparagine" evidence="2">
    <location>
        <position position="124"/>
    </location>
</feature>
<feature type="glycosylation site" description="N-linked (GlcNAc...) asparagine" evidence="2">
    <location>
        <position position="158"/>
    </location>
</feature>
<feature type="glycosylation site" description="N-linked (GlcNAc...) asparagine" evidence="2">
    <location>
        <position position="310"/>
    </location>
</feature>
<feature type="glycosylation site" description="N-linked (GlcNAc...) asparagine" evidence="2">
    <location>
        <position position="372"/>
    </location>
</feature>
<feature type="glycosylation site" description="N-linked (GlcNAc...) asparagine" evidence="2">
    <location>
        <position position="375"/>
    </location>
</feature>
<feature type="disulfide bond" evidence="1">
    <location>
        <begin position="106"/>
        <end position="383"/>
    </location>
</feature>
<feature type="disulfide bond" evidence="1">
    <location>
        <begin position="269"/>
        <end position="280"/>
    </location>
</feature>
<feature type="disulfide bond" evidence="1">
    <location>
        <begin position="304"/>
        <end position="351"/>
    </location>
</feature>
<feature type="splice variant" id="VSP_022850" description="In isoform 2." evidence="4">
    <location>
        <begin position="1"/>
        <end position="96"/>
    </location>
</feature>
<feature type="splice variant" id="VSP_022851" description="In isoform 2." evidence="4">
    <original>LLWLNGG</original>
    <variation>MSKSMKR</variation>
    <location>
        <begin position="97"/>
        <end position="103"/>
    </location>
</feature>
<feature type="splice variant" id="VSP_022852" description="In isoform 2." evidence="4">
    <original>GGWTVEYD</original>
    <variation>NLVPSYKL</variation>
    <location>
        <begin position="452"/>
        <end position="459"/>
    </location>
</feature>
<feature type="splice variant" id="VSP_022853" description="In isoform 2." evidence="4">
    <location>
        <begin position="460"/>
        <end position="499"/>
    </location>
</feature>